<evidence type="ECO:0000256" key="1">
    <source>
        <dbReference type="SAM" id="MobiDB-lite"/>
    </source>
</evidence>
<evidence type="ECO:0000305" key="2"/>
<dbReference type="EMBL" id="X56280">
    <property type="protein sequence ID" value="CAA39727.1"/>
    <property type="molecule type" value="mRNA"/>
</dbReference>
<dbReference type="PIR" id="S12095">
    <property type="entry name" value="S12095"/>
</dbReference>
<dbReference type="Proteomes" id="UP000504610">
    <property type="component" value="Unplaced"/>
</dbReference>
<dbReference type="GO" id="GO:0005829">
    <property type="term" value="C:cytosol"/>
    <property type="evidence" value="ECO:0007669"/>
    <property type="project" value="TreeGrafter"/>
</dbReference>
<dbReference type="GO" id="GO:0046872">
    <property type="term" value="F:metal ion binding"/>
    <property type="evidence" value="ECO:0007669"/>
    <property type="project" value="UniProtKB-ARBA"/>
</dbReference>
<dbReference type="GO" id="GO:0009631">
    <property type="term" value="P:cold acclimation"/>
    <property type="evidence" value="ECO:0007669"/>
    <property type="project" value="TreeGrafter"/>
</dbReference>
<dbReference type="GO" id="GO:0009737">
    <property type="term" value="P:response to abscisic acid"/>
    <property type="evidence" value="ECO:0007669"/>
    <property type="project" value="TreeGrafter"/>
</dbReference>
<dbReference type="GO" id="GO:0009414">
    <property type="term" value="P:response to water deprivation"/>
    <property type="evidence" value="ECO:0007669"/>
    <property type="project" value="UniProtKB-ARBA"/>
</dbReference>
<dbReference type="InterPro" id="IPR000167">
    <property type="entry name" value="Dehydrin"/>
</dbReference>
<dbReference type="InterPro" id="IPR030513">
    <property type="entry name" value="Dehydrin_CS"/>
</dbReference>
<dbReference type="PANTHER" id="PTHR33346:SF5">
    <property type="entry name" value="DEHYDRIN LEA-RELATED"/>
    <property type="match status" value="1"/>
</dbReference>
<dbReference type="PANTHER" id="PTHR33346">
    <property type="entry name" value="DEHYDRIN XERO 2-RELATED"/>
    <property type="match status" value="1"/>
</dbReference>
<dbReference type="Pfam" id="PF00257">
    <property type="entry name" value="Dehydrin"/>
    <property type="match status" value="1"/>
</dbReference>
<dbReference type="PROSITE" id="PS00315">
    <property type="entry name" value="DEHYDRIN_1"/>
    <property type="match status" value="1"/>
</dbReference>
<dbReference type="PROSITE" id="PS00823">
    <property type="entry name" value="DEHYDRIN_2"/>
    <property type="match status" value="1"/>
</dbReference>
<proteinExistence type="evidence at transcript level"/>
<feature type="chain" id="PRO_0000100057" description="Late embryogenesis abundant protein">
    <location>
        <begin position="1"/>
        <end position="184"/>
    </location>
</feature>
<feature type="region of interest" description="Disordered" evidence="1">
    <location>
        <begin position="49"/>
        <end position="184"/>
    </location>
</feature>
<feature type="compositionally biased region" description="Low complexity" evidence="1">
    <location>
        <begin position="60"/>
        <end position="86"/>
    </location>
</feature>
<feature type="compositionally biased region" description="Basic and acidic residues" evidence="1">
    <location>
        <begin position="87"/>
        <end position="98"/>
    </location>
</feature>
<feature type="compositionally biased region" description="Basic and acidic residues" evidence="1">
    <location>
        <begin position="122"/>
        <end position="138"/>
    </location>
</feature>
<feature type="compositionally biased region" description="Low complexity" evidence="1">
    <location>
        <begin position="139"/>
        <end position="159"/>
    </location>
</feature>
<feature type="compositionally biased region" description="Basic and acidic residues" evidence="1">
    <location>
        <begin position="160"/>
        <end position="177"/>
    </location>
</feature>
<sequence length="184" mass="19108">MADLKDERGNPIHLTDAYGNPVQLSDEFGNPMHITGVASSAPQYKDSVTGNIAEYPTEAPPAGVAAGTGAAATTAAGVTTSETTTGQEHHGSLGEHLRRSGSSSSSSSEDDGQGGRRKKSIKDKIKDKLGGGKHKDEQTPTTATTTGPTTTTTTTGAAADQHHEKKGILEKIKEKLPGHHNHHP</sequence>
<organism>
    <name type="scientific">Raphanus sativus</name>
    <name type="common">Radish</name>
    <name type="synonym">Raphanus raphanistrum var. sativus</name>
    <dbReference type="NCBI Taxonomy" id="3726"/>
    <lineage>
        <taxon>Eukaryota</taxon>
        <taxon>Viridiplantae</taxon>
        <taxon>Streptophyta</taxon>
        <taxon>Embryophyta</taxon>
        <taxon>Tracheophyta</taxon>
        <taxon>Spermatophyta</taxon>
        <taxon>Magnoliopsida</taxon>
        <taxon>eudicotyledons</taxon>
        <taxon>Gunneridae</taxon>
        <taxon>Pentapetalae</taxon>
        <taxon>rosids</taxon>
        <taxon>malvids</taxon>
        <taxon>Brassicales</taxon>
        <taxon>Brassicaceae</taxon>
        <taxon>Brassiceae</taxon>
        <taxon>Raphanus</taxon>
    </lineage>
</organism>
<reference key="1">
    <citation type="journal article" date="1990" name="Nucleic Acids Res.">
        <title>Nucleotide sequence of a radish cDNA clone coding for a late embryogenesis abundant (LEA) protein.</title>
        <authorList>
            <person name="Raynal M."/>
            <person name="Gaubier P."/>
            <person name="Grellet F."/>
            <person name="Delseny M."/>
        </authorList>
    </citation>
    <scope>NUCLEOTIDE SEQUENCE [MRNA]</scope>
    <source>
        <tissue>Seed</tissue>
    </source>
</reference>
<keyword id="KW-1185">Reference proteome</keyword>
<keyword id="KW-0677">Repeat</keyword>
<comment type="function">
    <text>LEA protein are late embryogenesis abundant in higher plant seed embryos. There are two subsets of LEA proteins (5a, and 5b), the first ones are expressed when the cotyledon weight reach 80 mg and the second set are expressed above 100 mg. The function of those proteins is not known.</text>
</comment>
<comment type="similarity">
    <text evidence="2">Belongs to the plant dehydrin family.</text>
</comment>
<accession>P21298</accession>
<protein>
    <recommendedName>
        <fullName>Late embryogenesis abundant protein</fullName>
        <shortName>Protein LEA</shortName>
    </recommendedName>
</protein>
<name>DHLE_RAPSA</name>